<reference key="1">
    <citation type="journal article" date="2007" name="PLoS Genet.">
        <title>Patterns and implications of gene gain and loss in the evolution of Prochlorococcus.</title>
        <authorList>
            <person name="Kettler G.C."/>
            <person name="Martiny A.C."/>
            <person name="Huang K."/>
            <person name="Zucker J."/>
            <person name="Coleman M.L."/>
            <person name="Rodrigue S."/>
            <person name="Chen F."/>
            <person name="Lapidus A."/>
            <person name="Ferriera S."/>
            <person name="Johnson J."/>
            <person name="Steglich C."/>
            <person name="Church G.M."/>
            <person name="Richardson P."/>
            <person name="Chisholm S.W."/>
        </authorList>
    </citation>
    <scope>NUCLEOTIDE SEQUENCE [LARGE SCALE GENOMIC DNA]</scope>
    <source>
        <strain>NATL2A</strain>
    </source>
</reference>
<keyword id="KW-0067">ATP-binding</keyword>
<keyword id="KW-0436">Ligase</keyword>
<keyword id="KW-0547">Nucleotide-binding</keyword>
<keyword id="KW-0648">Protein biosynthesis</keyword>
<keyword id="KW-1185">Reference proteome</keyword>
<feature type="chain" id="PRO_1000016176" description="Aspartyl/glutamyl-tRNA(Asn/Gln) amidotransferase subunit C">
    <location>
        <begin position="1"/>
        <end position="95"/>
    </location>
</feature>
<accession>Q46HD8</accession>
<proteinExistence type="inferred from homology"/>
<organism>
    <name type="scientific">Prochlorococcus marinus (strain NATL2A)</name>
    <dbReference type="NCBI Taxonomy" id="59920"/>
    <lineage>
        <taxon>Bacteria</taxon>
        <taxon>Bacillati</taxon>
        <taxon>Cyanobacteriota</taxon>
        <taxon>Cyanophyceae</taxon>
        <taxon>Synechococcales</taxon>
        <taxon>Prochlorococcaceae</taxon>
        <taxon>Prochlorococcus</taxon>
    </lineage>
</organism>
<name>GATC_PROMT</name>
<evidence type="ECO:0000255" key="1">
    <source>
        <dbReference type="HAMAP-Rule" id="MF_00122"/>
    </source>
</evidence>
<comment type="function">
    <text evidence="1">Allows the formation of correctly charged Asn-tRNA(Asn) or Gln-tRNA(Gln) through the transamidation of misacylated Asp-tRNA(Asn) or Glu-tRNA(Gln) in organisms which lack either or both of asparaginyl-tRNA or glutaminyl-tRNA synthetases. The reaction takes place in the presence of glutamine and ATP through an activated phospho-Asp-tRNA(Asn) or phospho-Glu-tRNA(Gln).</text>
</comment>
<comment type="catalytic activity">
    <reaction evidence="1">
        <text>L-glutamyl-tRNA(Gln) + L-glutamine + ATP + H2O = L-glutaminyl-tRNA(Gln) + L-glutamate + ADP + phosphate + H(+)</text>
        <dbReference type="Rhea" id="RHEA:17521"/>
        <dbReference type="Rhea" id="RHEA-COMP:9681"/>
        <dbReference type="Rhea" id="RHEA-COMP:9684"/>
        <dbReference type="ChEBI" id="CHEBI:15377"/>
        <dbReference type="ChEBI" id="CHEBI:15378"/>
        <dbReference type="ChEBI" id="CHEBI:29985"/>
        <dbReference type="ChEBI" id="CHEBI:30616"/>
        <dbReference type="ChEBI" id="CHEBI:43474"/>
        <dbReference type="ChEBI" id="CHEBI:58359"/>
        <dbReference type="ChEBI" id="CHEBI:78520"/>
        <dbReference type="ChEBI" id="CHEBI:78521"/>
        <dbReference type="ChEBI" id="CHEBI:456216"/>
    </reaction>
</comment>
<comment type="catalytic activity">
    <reaction evidence="1">
        <text>L-aspartyl-tRNA(Asn) + L-glutamine + ATP + H2O = L-asparaginyl-tRNA(Asn) + L-glutamate + ADP + phosphate + 2 H(+)</text>
        <dbReference type="Rhea" id="RHEA:14513"/>
        <dbReference type="Rhea" id="RHEA-COMP:9674"/>
        <dbReference type="Rhea" id="RHEA-COMP:9677"/>
        <dbReference type="ChEBI" id="CHEBI:15377"/>
        <dbReference type="ChEBI" id="CHEBI:15378"/>
        <dbReference type="ChEBI" id="CHEBI:29985"/>
        <dbReference type="ChEBI" id="CHEBI:30616"/>
        <dbReference type="ChEBI" id="CHEBI:43474"/>
        <dbReference type="ChEBI" id="CHEBI:58359"/>
        <dbReference type="ChEBI" id="CHEBI:78515"/>
        <dbReference type="ChEBI" id="CHEBI:78516"/>
        <dbReference type="ChEBI" id="CHEBI:456216"/>
    </reaction>
</comment>
<comment type="subunit">
    <text evidence="1">Heterotrimer of A, B and C subunits.</text>
</comment>
<comment type="similarity">
    <text evidence="1">Belongs to the GatC family.</text>
</comment>
<dbReference type="EC" id="6.3.5.-" evidence="1"/>
<dbReference type="EMBL" id="CP000095">
    <property type="protein sequence ID" value="AAZ59090.1"/>
    <property type="molecule type" value="Genomic_DNA"/>
</dbReference>
<dbReference type="RefSeq" id="WP_011294235.1">
    <property type="nucleotide sequence ID" value="NC_007335.2"/>
</dbReference>
<dbReference type="SMR" id="Q46HD8"/>
<dbReference type="STRING" id="59920.PMN2A_1602"/>
<dbReference type="KEGG" id="pmn:PMN2A_1602"/>
<dbReference type="HOGENOM" id="CLU_105899_2_0_3"/>
<dbReference type="OrthoDB" id="9813938at2"/>
<dbReference type="PhylomeDB" id="Q46HD8"/>
<dbReference type="Proteomes" id="UP000002535">
    <property type="component" value="Chromosome"/>
</dbReference>
<dbReference type="GO" id="GO:0050566">
    <property type="term" value="F:asparaginyl-tRNA synthase (glutamine-hydrolyzing) activity"/>
    <property type="evidence" value="ECO:0007669"/>
    <property type="project" value="RHEA"/>
</dbReference>
<dbReference type="GO" id="GO:0005524">
    <property type="term" value="F:ATP binding"/>
    <property type="evidence" value="ECO:0007669"/>
    <property type="project" value="UniProtKB-KW"/>
</dbReference>
<dbReference type="GO" id="GO:0050567">
    <property type="term" value="F:glutaminyl-tRNA synthase (glutamine-hydrolyzing) activity"/>
    <property type="evidence" value="ECO:0007669"/>
    <property type="project" value="UniProtKB-UniRule"/>
</dbReference>
<dbReference type="GO" id="GO:0070681">
    <property type="term" value="P:glutaminyl-tRNAGln biosynthesis via transamidation"/>
    <property type="evidence" value="ECO:0007669"/>
    <property type="project" value="TreeGrafter"/>
</dbReference>
<dbReference type="GO" id="GO:0006450">
    <property type="term" value="P:regulation of translational fidelity"/>
    <property type="evidence" value="ECO:0007669"/>
    <property type="project" value="InterPro"/>
</dbReference>
<dbReference type="GO" id="GO:0006412">
    <property type="term" value="P:translation"/>
    <property type="evidence" value="ECO:0007669"/>
    <property type="project" value="UniProtKB-UniRule"/>
</dbReference>
<dbReference type="Gene3D" id="1.10.20.60">
    <property type="entry name" value="Glu-tRNAGln amidotransferase C subunit, N-terminal domain"/>
    <property type="match status" value="1"/>
</dbReference>
<dbReference type="HAMAP" id="MF_00122">
    <property type="entry name" value="GatC"/>
    <property type="match status" value="1"/>
</dbReference>
<dbReference type="InterPro" id="IPR036113">
    <property type="entry name" value="Asp/Glu-ADT_sf_sub_c"/>
</dbReference>
<dbReference type="InterPro" id="IPR003837">
    <property type="entry name" value="GatC"/>
</dbReference>
<dbReference type="NCBIfam" id="TIGR00135">
    <property type="entry name" value="gatC"/>
    <property type="match status" value="1"/>
</dbReference>
<dbReference type="PANTHER" id="PTHR15004">
    <property type="entry name" value="GLUTAMYL-TRNA(GLN) AMIDOTRANSFERASE SUBUNIT C, MITOCHONDRIAL"/>
    <property type="match status" value="1"/>
</dbReference>
<dbReference type="PANTHER" id="PTHR15004:SF0">
    <property type="entry name" value="GLUTAMYL-TRNA(GLN) AMIDOTRANSFERASE SUBUNIT C, MITOCHONDRIAL"/>
    <property type="match status" value="1"/>
</dbReference>
<dbReference type="Pfam" id="PF02686">
    <property type="entry name" value="GatC"/>
    <property type="match status" value="1"/>
</dbReference>
<dbReference type="SUPFAM" id="SSF141000">
    <property type="entry name" value="Glu-tRNAGln amidotransferase C subunit"/>
    <property type="match status" value="1"/>
</dbReference>
<gene>
    <name evidence="1" type="primary">gatC</name>
    <name type="ordered locus">PMN2A_1602</name>
</gene>
<sequence length="95" mass="10956">MTKISSSDVRKVAQLARLELPEDQIETYTEQLEEILSYVDQLQEIDTKNIPPTTRAVEVVNAMRDDLVEVNCSREDLLNQAPHREGDFFRVPKIL</sequence>
<protein>
    <recommendedName>
        <fullName evidence="1">Aspartyl/glutamyl-tRNA(Asn/Gln) amidotransferase subunit C</fullName>
        <shortName evidence="1">Asp/Glu-ADT subunit C</shortName>
        <ecNumber evidence="1">6.3.5.-</ecNumber>
    </recommendedName>
</protein>